<dbReference type="EC" id="2.8.1.10" evidence="1"/>
<dbReference type="EMBL" id="AE003849">
    <property type="protein sequence ID" value="AAF83593.1"/>
    <property type="status" value="ALT_INIT"/>
    <property type="molecule type" value="Genomic_DNA"/>
</dbReference>
<dbReference type="PIR" id="F82761">
    <property type="entry name" value="F82761"/>
</dbReference>
<dbReference type="RefSeq" id="WP_031337090.1">
    <property type="nucleotide sequence ID" value="NC_002488.3"/>
</dbReference>
<dbReference type="SMR" id="Q9PF95"/>
<dbReference type="STRING" id="160492.XF_0783"/>
<dbReference type="KEGG" id="xfa:XF_0783"/>
<dbReference type="eggNOG" id="COG2022">
    <property type="taxonomic scope" value="Bacteria"/>
</dbReference>
<dbReference type="HOGENOM" id="CLU_062233_1_0_6"/>
<dbReference type="UniPathway" id="UPA00060"/>
<dbReference type="Proteomes" id="UP000000812">
    <property type="component" value="Chromosome"/>
</dbReference>
<dbReference type="GO" id="GO:0005737">
    <property type="term" value="C:cytoplasm"/>
    <property type="evidence" value="ECO:0007669"/>
    <property type="project" value="UniProtKB-SubCell"/>
</dbReference>
<dbReference type="GO" id="GO:1990107">
    <property type="term" value="F:thiazole synthase activity"/>
    <property type="evidence" value="ECO:0007669"/>
    <property type="project" value="UniProtKB-EC"/>
</dbReference>
<dbReference type="GO" id="GO:0009229">
    <property type="term" value="P:thiamine diphosphate biosynthetic process"/>
    <property type="evidence" value="ECO:0007669"/>
    <property type="project" value="UniProtKB-UniRule"/>
</dbReference>
<dbReference type="CDD" id="cd04728">
    <property type="entry name" value="ThiG"/>
    <property type="match status" value="1"/>
</dbReference>
<dbReference type="Gene3D" id="3.20.20.70">
    <property type="entry name" value="Aldolase class I"/>
    <property type="match status" value="1"/>
</dbReference>
<dbReference type="HAMAP" id="MF_00443">
    <property type="entry name" value="ThiG"/>
    <property type="match status" value="1"/>
</dbReference>
<dbReference type="InterPro" id="IPR013785">
    <property type="entry name" value="Aldolase_TIM"/>
</dbReference>
<dbReference type="InterPro" id="IPR033983">
    <property type="entry name" value="Thiazole_synthase_ThiG"/>
</dbReference>
<dbReference type="InterPro" id="IPR008867">
    <property type="entry name" value="ThiG"/>
</dbReference>
<dbReference type="PANTHER" id="PTHR34266">
    <property type="entry name" value="THIAZOLE SYNTHASE"/>
    <property type="match status" value="1"/>
</dbReference>
<dbReference type="PANTHER" id="PTHR34266:SF2">
    <property type="entry name" value="THIAZOLE SYNTHASE"/>
    <property type="match status" value="1"/>
</dbReference>
<dbReference type="Pfam" id="PF05690">
    <property type="entry name" value="ThiG"/>
    <property type="match status" value="1"/>
</dbReference>
<dbReference type="SUPFAM" id="SSF110399">
    <property type="entry name" value="ThiG-like"/>
    <property type="match status" value="1"/>
</dbReference>
<evidence type="ECO:0000255" key="1">
    <source>
        <dbReference type="HAMAP-Rule" id="MF_00443"/>
    </source>
</evidence>
<evidence type="ECO:0000305" key="2"/>
<sequence>MNNFASNDPLVIAGIVYSSRLLTGTGKFKDLDETRLATEAAGSQIVTVAIRRVNIGQDPHQPNLLNVLSPDRYTILPNTAGCYTAEDAVRTCRLARELLDGHRLTKLEVLGDKKTLYPDVVQTLKAAEQLVAEDFQVMVYTSDDPILAKRLEEIGCVAVMPLAAPIGSGLGVQNRYNLLEIIENAQVPIIVDAGVGTASDAAIAMELGCDAVLMNTAIAGARDPVLMASAMRKAVEAGREAFLAGRIPRKRYAAASSPVEGLVG</sequence>
<feature type="chain" id="PRO_0000162880" description="Thiazole synthase">
    <location>
        <begin position="1"/>
        <end position="264"/>
    </location>
</feature>
<feature type="active site" description="Schiff-base intermediate with DXP" evidence="1">
    <location>
        <position position="106"/>
    </location>
</feature>
<feature type="binding site" evidence="1">
    <location>
        <position position="167"/>
    </location>
    <ligand>
        <name>1-deoxy-D-xylulose 5-phosphate</name>
        <dbReference type="ChEBI" id="CHEBI:57792"/>
    </ligand>
</feature>
<feature type="binding site" evidence="1">
    <location>
        <begin position="193"/>
        <end position="194"/>
    </location>
    <ligand>
        <name>1-deoxy-D-xylulose 5-phosphate</name>
        <dbReference type="ChEBI" id="CHEBI:57792"/>
    </ligand>
</feature>
<feature type="binding site" evidence="1">
    <location>
        <begin position="215"/>
        <end position="216"/>
    </location>
    <ligand>
        <name>1-deoxy-D-xylulose 5-phosphate</name>
        <dbReference type="ChEBI" id="CHEBI:57792"/>
    </ligand>
</feature>
<name>THIG_XYLFA</name>
<comment type="function">
    <text evidence="1">Catalyzes the rearrangement of 1-deoxy-D-xylulose 5-phosphate (DXP) to produce the thiazole phosphate moiety of thiamine. Sulfur is provided by the thiocarboxylate moiety of the carrier protein ThiS. In vitro, sulfur can be provided by H(2)S.</text>
</comment>
<comment type="catalytic activity">
    <reaction evidence="1">
        <text>[ThiS sulfur-carrier protein]-C-terminal-Gly-aminoethanethioate + 2-iminoacetate + 1-deoxy-D-xylulose 5-phosphate = [ThiS sulfur-carrier protein]-C-terminal Gly-Gly + 2-[(2R,5Z)-2-carboxy-4-methylthiazol-5(2H)-ylidene]ethyl phosphate + 2 H2O + H(+)</text>
        <dbReference type="Rhea" id="RHEA:26297"/>
        <dbReference type="Rhea" id="RHEA-COMP:12909"/>
        <dbReference type="Rhea" id="RHEA-COMP:19908"/>
        <dbReference type="ChEBI" id="CHEBI:15377"/>
        <dbReference type="ChEBI" id="CHEBI:15378"/>
        <dbReference type="ChEBI" id="CHEBI:57792"/>
        <dbReference type="ChEBI" id="CHEBI:62899"/>
        <dbReference type="ChEBI" id="CHEBI:77846"/>
        <dbReference type="ChEBI" id="CHEBI:90778"/>
        <dbReference type="ChEBI" id="CHEBI:232372"/>
        <dbReference type="EC" id="2.8.1.10"/>
    </reaction>
</comment>
<comment type="pathway">
    <text evidence="1">Cofactor biosynthesis; thiamine diphosphate biosynthesis.</text>
</comment>
<comment type="subunit">
    <text evidence="1">Homotetramer. Forms heterodimers with either ThiH or ThiS.</text>
</comment>
<comment type="subcellular location">
    <subcellularLocation>
        <location evidence="1">Cytoplasm</location>
    </subcellularLocation>
</comment>
<comment type="similarity">
    <text evidence="1">Belongs to the ThiG family.</text>
</comment>
<comment type="sequence caution" evidence="2">
    <conflict type="erroneous initiation">
        <sequence resource="EMBL-CDS" id="AAF83593"/>
    </conflict>
</comment>
<keyword id="KW-0963">Cytoplasm</keyword>
<keyword id="KW-0704">Schiff base</keyword>
<keyword id="KW-0784">Thiamine biosynthesis</keyword>
<keyword id="KW-0808">Transferase</keyword>
<protein>
    <recommendedName>
        <fullName evidence="1">Thiazole synthase</fullName>
        <ecNumber evidence="1">2.8.1.10</ecNumber>
    </recommendedName>
</protein>
<proteinExistence type="inferred from homology"/>
<organism>
    <name type="scientific">Xylella fastidiosa (strain 9a5c)</name>
    <dbReference type="NCBI Taxonomy" id="160492"/>
    <lineage>
        <taxon>Bacteria</taxon>
        <taxon>Pseudomonadati</taxon>
        <taxon>Pseudomonadota</taxon>
        <taxon>Gammaproteobacteria</taxon>
        <taxon>Lysobacterales</taxon>
        <taxon>Lysobacteraceae</taxon>
        <taxon>Xylella</taxon>
    </lineage>
</organism>
<reference key="1">
    <citation type="journal article" date="2000" name="Nature">
        <title>The genome sequence of the plant pathogen Xylella fastidiosa.</title>
        <authorList>
            <person name="Simpson A.J.G."/>
            <person name="Reinach F.C."/>
            <person name="Arruda P."/>
            <person name="Abreu F.A."/>
            <person name="Acencio M."/>
            <person name="Alvarenga R."/>
            <person name="Alves L.M.C."/>
            <person name="Araya J.E."/>
            <person name="Baia G.S."/>
            <person name="Baptista C.S."/>
            <person name="Barros M.H."/>
            <person name="Bonaccorsi E.D."/>
            <person name="Bordin S."/>
            <person name="Bove J.M."/>
            <person name="Briones M.R.S."/>
            <person name="Bueno M.R.P."/>
            <person name="Camargo A.A."/>
            <person name="Camargo L.E.A."/>
            <person name="Carraro D.M."/>
            <person name="Carrer H."/>
            <person name="Colauto N.B."/>
            <person name="Colombo C."/>
            <person name="Costa F.F."/>
            <person name="Costa M.C.R."/>
            <person name="Costa-Neto C.M."/>
            <person name="Coutinho L.L."/>
            <person name="Cristofani M."/>
            <person name="Dias-Neto E."/>
            <person name="Docena C."/>
            <person name="El-Dorry H."/>
            <person name="Facincani A.P."/>
            <person name="Ferreira A.J.S."/>
            <person name="Ferreira V.C.A."/>
            <person name="Ferro J.A."/>
            <person name="Fraga J.S."/>
            <person name="Franca S.C."/>
            <person name="Franco M.C."/>
            <person name="Frohme M."/>
            <person name="Furlan L.R."/>
            <person name="Garnier M."/>
            <person name="Goldman G.H."/>
            <person name="Goldman M.H.S."/>
            <person name="Gomes S.L."/>
            <person name="Gruber A."/>
            <person name="Ho P.L."/>
            <person name="Hoheisel J.D."/>
            <person name="Junqueira M.L."/>
            <person name="Kemper E.L."/>
            <person name="Kitajima J.P."/>
            <person name="Krieger J.E."/>
            <person name="Kuramae E.E."/>
            <person name="Laigret F."/>
            <person name="Lambais M.R."/>
            <person name="Leite L.C.C."/>
            <person name="Lemos E.G.M."/>
            <person name="Lemos M.V.F."/>
            <person name="Lopes S.A."/>
            <person name="Lopes C.R."/>
            <person name="Machado J.A."/>
            <person name="Machado M.A."/>
            <person name="Madeira A.M.B.N."/>
            <person name="Madeira H.M.F."/>
            <person name="Marino C.L."/>
            <person name="Marques M.V."/>
            <person name="Martins E.A.L."/>
            <person name="Martins E.M.F."/>
            <person name="Matsukuma A.Y."/>
            <person name="Menck C.F.M."/>
            <person name="Miracca E.C."/>
            <person name="Miyaki C.Y."/>
            <person name="Monteiro-Vitorello C.B."/>
            <person name="Moon D.H."/>
            <person name="Nagai M.A."/>
            <person name="Nascimento A.L.T.O."/>
            <person name="Netto L.E.S."/>
            <person name="Nhani A. Jr."/>
            <person name="Nobrega F.G."/>
            <person name="Nunes L.R."/>
            <person name="Oliveira M.A."/>
            <person name="de Oliveira M.C."/>
            <person name="de Oliveira R.C."/>
            <person name="Palmieri D.A."/>
            <person name="Paris A."/>
            <person name="Peixoto B.R."/>
            <person name="Pereira G.A.G."/>
            <person name="Pereira H.A. Jr."/>
            <person name="Pesquero J.B."/>
            <person name="Quaggio R.B."/>
            <person name="Roberto P.G."/>
            <person name="Rodrigues V."/>
            <person name="de Rosa A.J.M."/>
            <person name="de Rosa V.E. Jr."/>
            <person name="de Sa R.G."/>
            <person name="Santelli R.V."/>
            <person name="Sawasaki H.E."/>
            <person name="da Silva A.C.R."/>
            <person name="da Silva A.M."/>
            <person name="da Silva F.R."/>
            <person name="Silva W.A. Jr."/>
            <person name="da Silveira J.F."/>
            <person name="Silvestri M.L.Z."/>
            <person name="Siqueira W.J."/>
            <person name="de Souza A.A."/>
            <person name="de Souza A.P."/>
            <person name="Terenzi M.F."/>
            <person name="Truffi D."/>
            <person name="Tsai S.M."/>
            <person name="Tsuhako M.H."/>
            <person name="Vallada H."/>
            <person name="Van Sluys M.A."/>
            <person name="Verjovski-Almeida S."/>
            <person name="Vettore A.L."/>
            <person name="Zago M.A."/>
            <person name="Zatz M."/>
            <person name="Meidanis J."/>
            <person name="Setubal J.C."/>
        </authorList>
    </citation>
    <scope>NUCLEOTIDE SEQUENCE [LARGE SCALE GENOMIC DNA]</scope>
    <source>
        <strain>9a5c</strain>
    </source>
</reference>
<gene>
    <name evidence="1" type="primary">thiG</name>
    <name type="ordered locus">XF_0783</name>
</gene>
<accession>Q9PF95</accession>